<proteinExistence type="inferred from homology"/>
<sequence length="358" mass="39927">MTALAELTADLLAAVEAAPDLPALEEARVAALGKKGRITAMMGDMRSLTPEERKERGQQLNALKDRVAEAIEARRTVLKKEALAQRLEAERIDVTLPVRPEAEGRIHPISQTIDEIIAIFASMGFTVAEGPDIESDFHNFTALNIPPEHPARQMHDTFYLPPAGDGAARVLRTHTSPVQIRTMLQEKPPIRIIAPGRTYRSDYDQTHTPMFHQVEALVIGEDINMGHLKGCILEFARAFFQVDDLPVRFRPSFFPFTEPSAEVDIGCSRKGGELKIGNHGDWLEIMGSGMVHPKVLENCGLDPARWQGFAFGMGIERIAMLKYGIPDLRTFFEADLRWLKHYGFVPLDMPNLAQGLTR</sequence>
<protein>
    <recommendedName>
        <fullName evidence="1">Phenylalanine--tRNA ligase alpha subunit</fullName>
        <ecNumber evidence="1">6.1.1.20</ecNumber>
    </recommendedName>
    <alternativeName>
        <fullName evidence="1">Phenylalanyl-tRNA synthetase alpha subunit</fullName>
        <shortName evidence="1">PheRS</shortName>
    </alternativeName>
</protein>
<name>SYFA_RHOCS</name>
<keyword id="KW-0030">Aminoacyl-tRNA synthetase</keyword>
<keyword id="KW-0067">ATP-binding</keyword>
<keyword id="KW-0963">Cytoplasm</keyword>
<keyword id="KW-0436">Ligase</keyword>
<keyword id="KW-0460">Magnesium</keyword>
<keyword id="KW-0479">Metal-binding</keyword>
<keyword id="KW-0547">Nucleotide-binding</keyword>
<keyword id="KW-0648">Protein biosynthesis</keyword>
<keyword id="KW-1185">Reference proteome</keyword>
<feature type="chain" id="PRO_1000114906" description="Phenylalanine--tRNA ligase alpha subunit">
    <location>
        <begin position="1"/>
        <end position="358"/>
    </location>
</feature>
<feature type="binding site" evidence="1">
    <location>
        <position position="258"/>
    </location>
    <ligand>
        <name>Mg(2+)</name>
        <dbReference type="ChEBI" id="CHEBI:18420"/>
        <note>shared with beta subunit</note>
    </ligand>
</feature>
<evidence type="ECO:0000255" key="1">
    <source>
        <dbReference type="HAMAP-Rule" id="MF_00281"/>
    </source>
</evidence>
<organism>
    <name type="scientific">Rhodospirillum centenum (strain ATCC 51521 / SW)</name>
    <dbReference type="NCBI Taxonomy" id="414684"/>
    <lineage>
        <taxon>Bacteria</taxon>
        <taxon>Pseudomonadati</taxon>
        <taxon>Pseudomonadota</taxon>
        <taxon>Alphaproteobacteria</taxon>
        <taxon>Rhodospirillales</taxon>
        <taxon>Rhodospirillaceae</taxon>
        <taxon>Rhodospirillum</taxon>
    </lineage>
</organism>
<comment type="catalytic activity">
    <reaction evidence="1">
        <text>tRNA(Phe) + L-phenylalanine + ATP = L-phenylalanyl-tRNA(Phe) + AMP + diphosphate + H(+)</text>
        <dbReference type="Rhea" id="RHEA:19413"/>
        <dbReference type="Rhea" id="RHEA-COMP:9668"/>
        <dbReference type="Rhea" id="RHEA-COMP:9699"/>
        <dbReference type="ChEBI" id="CHEBI:15378"/>
        <dbReference type="ChEBI" id="CHEBI:30616"/>
        <dbReference type="ChEBI" id="CHEBI:33019"/>
        <dbReference type="ChEBI" id="CHEBI:58095"/>
        <dbReference type="ChEBI" id="CHEBI:78442"/>
        <dbReference type="ChEBI" id="CHEBI:78531"/>
        <dbReference type="ChEBI" id="CHEBI:456215"/>
        <dbReference type="EC" id="6.1.1.20"/>
    </reaction>
</comment>
<comment type="cofactor">
    <cofactor evidence="1">
        <name>Mg(2+)</name>
        <dbReference type="ChEBI" id="CHEBI:18420"/>
    </cofactor>
    <text evidence="1">Binds 2 magnesium ions per tetramer.</text>
</comment>
<comment type="subunit">
    <text evidence="1">Tetramer of two alpha and two beta subunits.</text>
</comment>
<comment type="subcellular location">
    <subcellularLocation>
        <location evidence="1">Cytoplasm</location>
    </subcellularLocation>
</comment>
<comment type="similarity">
    <text evidence="1">Belongs to the class-II aminoacyl-tRNA synthetase family. Phe-tRNA synthetase alpha subunit type 1 subfamily.</text>
</comment>
<dbReference type="EC" id="6.1.1.20" evidence="1"/>
<dbReference type="EMBL" id="CP000613">
    <property type="protein sequence ID" value="ACI99702.1"/>
    <property type="molecule type" value="Genomic_DNA"/>
</dbReference>
<dbReference type="RefSeq" id="WP_012567487.1">
    <property type="nucleotide sequence ID" value="NC_011420.2"/>
</dbReference>
<dbReference type="SMR" id="B6IPK0"/>
<dbReference type="STRING" id="414684.RC1_2315"/>
<dbReference type="KEGG" id="rce:RC1_2315"/>
<dbReference type="eggNOG" id="COG0016">
    <property type="taxonomic scope" value="Bacteria"/>
</dbReference>
<dbReference type="HOGENOM" id="CLU_025086_0_1_5"/>
<dbReference type="OrthoDB" id="9800719at2"/>
<dbReference type="Proteomes" id="UP000001591">
    <property type="component" value="Chromosome"/>
</dbReference>
<dbReference type="GO" id="GO:0005737">
    <property type="term" value="C:cytoplasm"/>
    <property type="evidence" value="ECO:0007669"/>
    <property type="project" value="UniProtKB-SubCell"/>
</dbReference>
<dbReference type="GO" id="GO:0005524">
    <property type="term" value="F:ATP binding"/>
    <property type="evidence" value="ECO:0007669"/>
    <property type="project" value="UniProtKB-UniRule"/>
</dbReference>
<dbReference type="GO" id="GO:0000287">
    <property type="term" value="F:magnesium ion binding"/>
    <property type="evidence" value="ECO:0007669"/>
    <property type="project" value="UniProtKB-UniRule"/>
</dbReference>
<dbReference type="GO" id="GO:0004826">
    <property type="term" value="F:phenylalanine-tRNA ligase activity"/>
    <property type="evidence" value="ECO:0007669"/>
    <property type="project" value="UniProtKB-UniRule"/>
</dbReference>
<dbReference type="GO" id="GO:0000049">
    <property type="term" value="F:tRNA binding"/>
    <property type="evidence" value="ECO:0007669"/>
    <property type="project" value="InterPro"/>
</dbReference>
<dbReference type="GO" id="GO:0006432">
    <property type="term" value="P:phenylalanyl-tRNA aminoacylation"/>
    <property type="evidence" value="ECO:0007669"/>
    <property type="project" value="UniProtKB-UniRule"/>
</dbReference>
<dbReference type="CDD" id="cd00496">
    <property type="entry name" value="PheRS_alpha_core"/>
    <property type="match status" value="1"/>
</dbReference>
<dbReference type="FunFam" id="3.30.930.10:FF:000003">
    <property type="entry name" value="Phenylalanine--tRNA ligase alpha subunit"/>
    <property type="match status" value="1"/>
</dbReference>
<dbReference type="Gene3D" id="3.30.930.10">
    <property type="entry name" value="Bira Bifunctional Protein, Domain 2"/>
    <property type="match status" value="1"/>
</dbReference>
<dbReference type="HAMAP" id="MF_00281">
    <property type="entry name" value="Phe_tRNA_synth_alpha1"/>
    <property type="match status" value="1"/>
</dbReference>
<dbReference type="InterPro" id="IPR006195">
    <property type="entry name" value="aa-tRNA-synth_II"/>
</dbReference>
<dbReference type="InterPro" id="IPR045864">
    <property type="entry name" value="aa-tRNA-synth_II/BPL/LPL"/>
</dbReference>
<dbReference type="InterPro" id="IPR004529">
    <property type="entry name" value="Phe-tRNA-synth_IIc_asu"/>
</dbReference>
<dbReference type="InterPro" id="IPR004188">
    <property type="entry name" value="Phe-tRNA_ligase_II_N"/>
</dbReference>
<dbReference type="InterPro" id="IPR022911">
    <property type="entry name" value="Phe_tRNA_ligase_alpha1_bac"/>
</dbReference>
<dbReference type="InterPro" id="IPR002319">
    <property type="entry name" value="Phenylalanyl-tRNA_Synthase"/>
</dbReference>
<dbReference type="InterPro" id="IPR010978">
    <property type="entry name" value="tRNA-bd_arm"/>
</dbReference>
<dbReference type="NCBIfam" id="TIGR00468">
    <property type="entry name" value="pheS"/>
    <property type="match status" value="1"/>
</dbReference>
<dbReference type="PANTHER" id="PTHR11538:SF41">
    <property type="entry name" value="PHENYLALANINE--TRNA LIGASE, MITOCHONDRIAL"/>
    <property type="match status" value="1"/>
</dbReference>
<dbReference type="PANTHER" id="PTHR11538">
    <property type="entry name" value="PHENYLALANYL-TRNA SYNTHETASE"/>
    <property type="match status" value="1"/>
</dbReference>
<dbReference type="Pfam" id="PF02912">
    <property type="entry name" value="Phe_tRNA-synt_N"/>
    <property type="match status" value="1"/>
</dbReference>
<dbReference type="Pfam" id="PF01409">
    <property type="entry name" value="tRNA-synt_2d"/>
    <property type="match status" value="1"/>
</dbReference>
<dbReference type="SUPFAM" id="SSF55681">
    <property type="entry name" value="Class II aaRS and biotin synthetases"/>
    <property type="match status" value="1"/>
</dbReference>
<dbReference type="SUPFAM" id="SSF46589">
    <property type="entry name" value="tRNA-binding arm"/>
    <property type="match status" value="1"/>
</dbReference>
<dbReference type="PROSITE" id="PS50862">
    <property type="entry name" value="AA_TRNA_LIGASE_II"/>
    <property type="match status" value="1"/>
</dbReference>
<reference key="1">
    <citation type="submission" date="2007-03" db="EMBL/GenBank/DDBJ databases">
        <title>Genome sequence of Rhodospirillum centenum.</title>
        <authorList>
            <person name="Touchman J.W."/>
            <person name="Bauer C."/>
            <person name="Blankenship R.E."/>
        </authorList>
    </citation>
    <scope>NUCLEOTIDE SEQUENCE [LARGE SCALE GENOMIC DNA]</scope>
    <source>
        <strain>ATCC 51521 / SW</strain>
    </source>
</reference>
<accession>B6IPK0</accession>
<gene>
    <name evidence="1" type="primary">pheS</name>
    <name type="ordered locus">RC1_2315</name>
</gene>